<organism>
    <name type="scientific">Bacteroides phage crAss001</name>
    <name type="common">Bacteroides phage PhiCrAss001</name>
    <dbReference type="NCBI Taxonomy" id="2301731"/>
    <lineage>
        <taxon>Viruses</taxon>
        <taxon>Duplodnaviria</taxon>
        <taxon>Heunggongvirae</taxon>
        <taxon>Uroviricota</taxon>
        <taxon>Caudoviricetes</taxon>
        <taxon>Crassvirales</taxon>
        <taxon>Steigviridae</taxon>
        <taxon>Asinivirinae</taxon>
        <taxon>Kehishuvirus</taxon>
        <taxon>Kehishuvirus primarius</taxon>
    </lineage>
</organism>
<dbReference type="EMBL" id="MH675552">
    <property type="protein sequence ID" value="AXQ62663.1"/>
    <property type="molecule type" value="Genomic_DNA"/>
</dbReference>
<dbReference type="PDB" id="7QOG">
    <property type="method" value="EM"/>
    <property type="resolution" value="3.09 A"/>
    <property type="chains" value="A=1-806"/>
</dbReference>
<dbReference type="PDB" id="7QOH">
    <property type="method" value="EM"/>
    <property type="resolution" value="3.32 A"/>
    <property type="chains" value="l/m=1-806"/>
</dbReference>
<dbReference type="PDB" id="7QOI">
    <property type="method" value="EM"/>
    <property type="resolution" value="3.62 A"/>
    <property type="chains" value="FA/FB/FC/FD/FE/FF/FG/FH/FI/FJ/FK/FL=1-806"/>
</dbReference>
<dbReference type="PDB" id="7QOJ">
    <property type="method" value="EM"/>
    <property type="resolution" value="3.21 A"/>
    <property type="chains" value="A=1-806"/>
</dbReference>
<dbReference type="PDB" id="7QOL">
    <property type="method" value="EM"/>
    <property type="resolution" value="3.33 A"/>
    <property type="chains" value="A/O=1-806"/>
</dbReference>
<dbReference type="PDB" id="8CKB">
    <property type="method" value="EM"/>
    <property type="resolution" value="4.39 A"/>
    <property type="chains" value="H001/H002/H003/H004/H005/H006/H007/H008/H009/H010/H011/H012=1-806"/>
</dbReference>
<dbReference type="PDBsum" id="7QOG"/>
<dbReference type="PDBsum" id="7QOH"/>
<dbReference type="PDBsum" id="7QOI"/>
<dbReference type="PDBsum" id="7QOJ"/>
<dbReference type="PDBsum" id="7QOL"/>
<dbReference type="PDBsum" id="8CKB"/>
<dbReference type="EMDB" id="EMD-14089"/>
<dbReference type="EMDB" id="EMD-14090"/>
<dbReference type="EMDB" id="EMD-14091"/>
<dbReference type="EMDB" id="EMD-14092"/>
<dbReference type="EMDB" id="EMD-14094"/>
<dbReference type="SMR" id="A0A385DT68"/>
<dbReference type="Proteomes" id="UP000262320">
    <property type="component" value="Genome"/>
</dbReference>
<dbReference type="GO" id="GO:0019028">
    <property type="term" value="C:viral capsid"/>
    <property type="evidence" value="ECO:0007669"/>
    <property type="project" value="UniProtKB-KW"/>
</dbReference>
<evidence type="ECO:0000256" key="1">
    <source>
        <dbReference type="SAM" id="MobiDB-lite"/>
    </source>
</evidence>
<evidence type="ECO:0000269" key="2">
    <source>
    </source>
</evidence>
<evidence type="ECO:0000303" key="3">
    <source>
    </source>
</evidence>
<evidence type="ECO:0000303" key="4">
    <source>
    </source>
</evidence>
<evidence type="ECO:0000305" key="5">
    <source>
    </source>
</evidence>
<evidence type="ECO:0000312" key="6">
    <source>
        <dbReference type="EMBL" id="AXQ62663.1"/>
    </source>
</evidence>
<evidence type="ECO:0007829" key="7">
    <source>
        <dbReference type="PDB" id="7QOG"/>
    </source>
</evidence>
<evidence type="ECO:0007829" key="8">
    <source>
        <dbReference type="PDB" id="7QOH"/>
    </source>
</evidence>
<evidence type="ECO:0007829" key="9">
    <source>
        <dbReference type="PDB" id="7QOJ"/>
    </source>
</evidence>
<evidence type="ECO:0007829" key="10">
    <source>
        <dbReference type="PDB" id="7QOL"/>
    </source>
</evidence>
<comment type="function">
    <text evidence="2 5">Forms the portal vertex of the capsid (PubMed:37138077). Probably involved in head assembly, genome packaging, tail attachment, and genome ejection (Probable).</text>
</comment>
<comment type="subunit">
    <text evidence="2">Homododecamer (PubMed:37138077). Interacts with the Cargo protein 1 (PubMed:37138077). Interacts with the major capsid protein (PubMed:37138077).</text>
</comment>
<comment type="subcellular location">
    <subcellularLocation>
        <location evidence="2">Virion</location>
    </subcellularLocation>
    <text evidence="2">Forms the portal complex located at one vertex of the capsid (PubMed:37138077). Present in 12 copies in the virion (PubMed:37138077).</text>
</comment>
<reference key="1">
    <citation type="journal article" date="2018" name="Nat. Commun.">
        <title>PhiCrAss001 represents the most abundant bacteriophage family in the human gut and infects Bacteroides intestinalis.</title>
        <authorList>
            <person name="Shkoporov A.N."/>
            <person name="Khokhlova E.V."/>
            <person name="Fitzgerald C.B."/>
            <person name="Stockdale S.R."/>
            <person name="Draper L.A."/>
            <person name="Ross R.P."/>
            <person name="Hill C."/>
        </authorList>
    </citation>
    <scope>NUCLEOTIDE SEQUENCE [LARGE SCALE GENOMIC DNA]</scope>
</reference>
<reference key="2">
    <citation type="journal article" date="2023" name="Nature">
        <title>Structural atlas of a human gut crassvirus.</title>
        <authorList>
            <person name="Bayfield O.W."/>
            <person name="Shkoporov A.N."/>
            <person name="Yutin N."/>
            <person name="Khokhlova E.V."/>
            <person name="Smith J.L.R."/>
            <person name="Hawkins D.E.D.P."/>
            <person name="Koonin E.V."/>
            <person name="Hill C."/>
            <person name="Antson A.A."/>
        </authorList>
    </citation>
    <scope>SUBCELLULAR LOCATION</scope>
    <scope>SUBUNIT</scope>
    <scope>FUNCTION</scope>
    <scope>INTERACTION WITH THE CARGO PROTEIN 1</scope>
    <scope>INTERACTION WITH THE MAJOR CAPSID PROTEIN</scope>
</reference>
<proteinExistence type="evidence at protein level"/>
<keyword id="KW-0002">3D-structure</keyword>
<keyword id="KW-0167">Capsid protein</keyword>
<keyword id="KW-1185">Reference proteome</keyword>
<keyword id="KW-0118">Viral capsid assembly</keyword>
<keyword id="KW-0231">Viral genome packaging</keyword>
<keyword id="KW-1188">Viral release from host cell</keyword>
<keyword id="KW-0946">Virion</keyword>
<accession>A0A385DT68</accession>
<protein>
    <recommendedName>
        <fullName evidence="4">Portal protein</fullName>
    </recommendedName>
    <alternativeName>
        <fullName evidence="3">Gene product 20</fullName>
        <shortName evidence="3">gp20</shortName>
    </alternativeName>
</protein>
<feature type="chain" id="PRO_0000458028" description="Portal protein">
    <location>
        <begin position="1"/>
        <end position="806"/>
    </location>
</feature>
<feature type="region of interest" description="Interaction with Cargo protein 1">
    <location>
        <begin position="337"/>
        <end position="380"/>
    </location>
</feature>
<feature type="region of interest" description="Disordered" evidence="1">
    <location>
        <begin position="783"/>
        <end position="806"/>
    </location>
</feature>
<feature type="compositionally biased region" description="Basic and acidic residues" evidence="1">
    <location>
        <begin position="783"/>
        <end position="792"/>
    </location>
</feature>
<feature type="compositionally biased region" description="Basic residues" evidence="1">
    <location>
        <begin position="795"/>
        <end position="806"/>
    </location>
</feature>
<feature type="helix" evidence="7">
    <location>
        <begin position="14"/>
        <end position="16"/>
    </location>
</feature>
<feature type="helix" evidence="7">
    <location>
        <begin position="19"/>
        <end position="31"/>
    </location>
</feature>
<feature type="strand" evidence="9">
    <location>
        <begin position="39"/>
        <end position="41"/>
    </location>
</feature>
<feature type="helix" evidence="7">
    <location>
        <begin position="44"/>
        <end position="54"/>
    </location>
</feature>
<feature type="turn" evidence="7">
    <location>
        <begin position="60"/>
        <end position="63"/>
    </location>
</feature>
<feature type="turn" evidence="7">
    <location>
        <begin position="77"/>
        <end position="79"/>
    </location>
</feature>
<feature type="helix" evidence="7">
    <location>
        <begin position="88"/>
        <end position="100"/>
    </location>
</feature>
<feature type="strand" evidence="7">
    <location>
        <begin position="106"/>
        <end position="111"/>
    </location>
</feature>
<feature type="helix" evidence="7">
    <location>
        <begin position="117"/>
        <end position="137"/>
    </location>
</feature>
<feature type="helix" evidence="7">
    <location>
        <begin position="144"/>
        <end position="152"/>
    </location>
</feature>
<feature type="strand" evidence="7">
    <location>
        <begin position="155"/>
        <end position="157"/>
    </location>
</feature>
<feature type="helix" evidence="7">
    <location>
        <begin position="159"/>
        <end position="178"/>
    </location>
</feature>
<feature type="helix" evidence="7">
    <location>
        <begin position="180"/>
        <end position="191"/>
    </location>
</feature>
<feature type="strand" evidence="7">
    <location>
        <begin position="194"/>
        <end position="204"/>
    </location>
</feature>
<feature type="strand" evidence="7">
    <location>
        <begin position="207"/>
        <end position="212"/>
    </location>
</feature>
<feature type="strand" evidence="7">
    <location>
        <begin position="217"/>
        <end position="222"/>
    </location>
</feature>
<feature type="strand" evidence="7">
    <location>
        <begin position="227"/>
        <end position="229"/>
    </location>
</feature>
<feature type="strand" evidence="7">
    <location>
        <begin position="233"/>
        <end position="241"/>
    </location>
</feature>
<feature type="helix" evidence="7">
    <location>
        <begin position="243"/>
        <end position="250"/>
    </location>
</feature>
<feature type="turn" evidence="7">
    <location>
        <begin position="251"/>
        <end position="253"/>
    </location>
</feature>
<feature type="helix" evidence="7">
    <location>
        <begin position="256"/>
        <end position="263"/>
    </location>
</feature>
<feature type="turn" evidence="8">
    <location>
        <begin position="292"/>
        <end position="295"/>
    </location>
</feature>
<feature type="strand" evidence="8">
    <location>
        <begin position="296"/>
        <end position="298"/>
    </location>
</feature>
<feature type="strand" evidence="7">
    <location>
        <begin position="328"/>
        <end position="347"/>
    </location>
</feature>
<feature type="strand" evidence="7">
    <location>
        <begin position="349"/>
        <end position="351"/>
    </location>
</feature>
<feature type="strand" evidence="7">
    <location>
        <begin position="354"/>
        <end position="360"/>
    </location>
</feature>
<feature type="turn" evidence="7">
    <location>
        <begin position="367"/>
        <end position="370"/>
    </location>
</feature>
<feature type="strand" evidence="7">
    <location>
        <begin position="372"/>
        <end position="387"/>
    </location>
</feature>
<feature type="turn" evidence="7">
    <location>
        <begin position="388"/>
        <end position="390"/>
    </location>
</feature>
<feature type="strand" evidence="7">
    <location>
        <begin position="391"/>
        <end position="397"/>
    </location>
</feature>
<feature type="strand" evidence="7">
    <location>
        <begin position="414"/>
        <end position="419"/>
    </location>
</feature>
<feature type="strand" evidence="7">
    <location>
        <begin position="422"/>
        <end position="425"/>
    </location>
</feature>
<feature type="helix" evidence="7">
    <location>
        <begin position="430"/>
        <end position="453"/>
    </location>
</feature>
<feature type="strand" evidence="9">
    <location>
        <begin position="459"/>
        <end position="461"/>
    </location>
</feature>
<feature type="helix" evidence="7">
    <location>
        <begin position="473"/>
        <end position="483"/>
    </location>
</feature>
<feature type="strand" evidence="10">
    <location>
        <begin position="484"/>
        <end position="488"/>
    </location>
</feature>
<feature type="helix" evidence="7">
    <location>
        <begin position="493"/>
        <end position="495"/>
    </location>
</feature>
<feature type="helix" evidence="7">
    <location>
        <begin position="496"/>
        <end position="499"/>
    </location>
</feature>
<feature type="helix" evidence="7">
    <location>
        <begin position="505"/>
        <end position="508"/>
    </location>
</feature>
<feature type="strand" evidence="9">
    <location>
        <begin position="513"/>
        <end position="515"/>
    </location>
</feature>
<feature type="helix" evidence="7">
    <location>
        <begin position="519"/>
        <end position="540"/>
    </location>
</feature>
<feature type="turn" evidence="9">
    <location>
        <begin position="546"/>
        <end position="548"/>
    </location>
</feature>
<feature type="helix" evidence="7">
    <location>
        <begin position="565"/>
        <end position="570"/>
    </location>
</feature>
<feature type="helix" evidence="7">
    <location>
        <begin position="572"/>
        <end position="597"/>
    </location>
</feature>
<feature type="helix" evidence="7">
    <location>
        <begin position="604"/>
        <end position="607"/>
    </location>
</feature>
<feature type="turn" evidence="7">
    <location>
        <begin position="611"/>
        <end position="614"/>
    </location>
</feature>
<feature type="helix" evidence="7">
    <location>
        <begin position="615"/>
        <end position="617"/>
    </location>
</feature>
<feature type="turn" evidence="9">
    <location>
        <begin position="619"/>
        <end position="622"/>
    </location>
</feature>
<feature type="helix" evidence="7">
    <location>
        <begin position="625"/>
        <end position="627"/>
    </location>
</feature>
<feature type="strand" evidence="7">
    <location>
        <begin position="630"/>
        <end position="633"/>
    </location>
</feature>
<feature type="helix" evidence="7">
    <location>
        <begin position="636"/>
        <end position="653"/>
    </location>
</feature>
<feature type="turn" evidence="7">
    <location>
        <begin position="654"/>
        <end position="656"/>
    </location>
</feature>
<feature type="helix" evidence="7">
    <location>
        <begin position="660"/>
        <end position="667"/>
    </location>
</feature>
<feature type="helix" evidence="7">
    <location>
        <begin position="674"/>
        <end position="737"/>
    </location>
</feature>
<name>PORTL_BPCA1</name>
<organismHost>
    <name type="scientific">Bacteroides intestinalis</name>
    <dbReference type="NCBI Taxonomy" id="329854"/>
</organismHost>
<sequence length="806" mass="93008">MADFLNFPRQMLPFSKKTKQWRKDCLLWANQKTFFNYSLVRKSVIHKKINYDLLNGRLHMSDLELVLNPDGIKAAYIPDRLQHYPIMNSKLNVLRGEESKRVFDFKVVVTNPNAISEIEDNKKNELLQRLQEMITDTSISEDEYNIKLEKLNDYYTYEWQDIREVRANELLNHYIKEYDIPLIFNNGFMDAMTCGEEIYQCDIVGGEPVIERVNPLKIRIFKSGYSNKVEDADMIILEDYWSPGRVIDTYYDVLSPKDIKYIETMPDYIGQGAVDQMDNIDERYGFVNQNMIGDEITVRDGTYFFDPANLFTEGIANSLLPYDLAGNLRVLRLYWKSKRKILKVKSYDPETGEEEWNFYPENYVVNKEAGEEVQSFWVNEAWEGTMIGNEIFVNMRPRLIQYNRLNNPSRCHFGIVGSIYNLNDSRPFSLVDMMKPYNYLYDAIHDRLNKAIASNWGSILELDLSKVPKGWDVGKWMYYARVNHIAVIDSFKEGTIGASTGKLAGALNNAGKGMIETNIGNYIQQQINLLEFIKMEMADVAGISKQREGQISQRETVGGVERATLQSSHITEWLFTIHDDVKKRALECFLETAKVALKGRNKKFQYILSDTSTRVMEIDGDEFAEADYGLVVDNSNGTQELQQKLDTLAQAALQTQTLSFSTITKLYTSSSLAEKQRLIEKDEKQIRERQAQAQKEQLEAQQQIAAMQQQQKEAELLQKEEANIRDNQTKIIIAQIQSEGGPDEEDGIMIDDYSPEAKANLAEKIREFDEKLKLDKDKLKLDKKKAETDASIKRQALRKKSSTTNK</sequence>
<gene>
    <name evidence="6" type="ORF">crAss001_20</name>
</gene>